<reference key="1">
    <citation type="journal article" date="1992" name="J. Gen. Virol.">
        <title>Nucleotide sequence analysis of the movement genes of resistance breaking strains of tomato mosaic virus.</title>
        <authorList>
            <person name="Calder V.L."/>
            <person name="Palukaitis P."/>
        </authorList>
    </citation>
    <scope>NUCLEOTIDE SEQUENCE</scope>
</reference>
<keyword id="KW-1031">Host cell junction</keyword>
<keyword id="KW-1035">Host cytoplasm</keyword>
<keyword id="KW-1037">Host cytoskeleton</keyword>
<keyword id="KW-0694">RNA-binding</keyword>
<keyword id="KW-0813">Transport</keyword>
<keyword id="KW-0916">Viral movement protein</keyword>
<organism>
    <name type="scientific">Tomato mosaic virus (strain LII)</name>
    <name type="common">ToMV</name>
    <dbReference type="NCBI Taxonomy" id="31747"/>
    <lineage>
        <taxon>Viruses</taxon>
        <taxon>Riboviria</taxon>
        <taxon>Orthornavirae</taxon>
        <taxon>Kitrinoviricota</taxon>
        <taxon>Alsuviricetes</taxon>
        <taxon>Martellivirales</taxon>
        <taxon>Virgaviridae</taxon>
        <taxon>Tobamovirus</taxon>
        <taxon>Tomato mosaic virus</taxon>
    </lineage>
</organism>
<evidence type="ECO:0000250" key="1">
    <source>
        <dbReference type="UniProtKB" id="A0A0S4IJL0"/>
    </source>
</evidence>
<evidence type="ECO:0000250" key="2">
    <source>
        <dbReference type="UniProtKB" id="P03583"/>
    </source>
</evidence>
<evidence type="ECO:0000250" key="3">
    <source>
        <dbReference type="UniProtKB" id="P69513"/>
    </source>
</evidence>
<evidence type="ECO:0000256" key="4">
    <source>
        <dbReference type="SAM" id="MobiDB-lite"/>
    </source>
</evidence>
<evidence type="ECO:0000305" key="5"/>
<organismHost>
    <name type="scientific">Antirrhinum majus</name>
    <name type="common">Garden snapdragon</name>
    <dbReference type="NCBI Taxonomy" id="4151"/>
</organismHost>
<organismHost>
    <name type="scientific">Capsicum</name>
    <name type="common">peppers</name>
    <dbReference type="NCBI Taxonomy" id="4071"/>
</organismHost>
<organismHost>
    <name type="scientific">Delphinium</name>
    <dbReference type="NCBI Taxonomy" id="46246"/>
</organismHost>
<organismHost>
    <name type="scientific">Petunia</name>
    <dbReference type="NCBI Taxonomy" id="4101"/>
</organismHost>
<organismHost>
    <name type="scientific">Solanum lycopersicum</name>
    <name type="common">Tomato</name>
    <name type="synonym">Lycopersicon esculentum</name>
    <dbReference type="NCBI Taxonomy" id="4081"/>
</organismHost>
<organismHost>
    <name type="scientific">Tagetes</name>
    <name type="common">marigolds</name>
    <dbReference type="NCBI Taxonomy" id="13707"/>
</organismHost>
<accession>P29800</accession>
<sequence length="264" mass="29396">MALVVKGKVNINEFIDLSKSEKLLPSMFTPVKSVMVSKVDKIMVHKNESLSEVNLLKGVKLIEGGYVWLVGLVVSGEWNLPDNCRGGVSVCMVDKRMERADEATLGSYYTAAAKKRFQFKVVPNYGITTKDAKKNIWQVLVNIKNVKMSAGYCPLSLEFVSVCIVYKNNIKLGLREKVTSVKDGGPMELSEEVVDEFMENVPMSVRLAKFRTKPSKRGPKNNNNLGKGRSGGRPKPKSFDEVEKEFDNLIEDEAETSVADSDSY</sequence>
<name>MVP_TOML2</name>
<protein>
    <recommendedName>
        <fullName>Movement protein</fullName>
    </recommendedName>
    <alternativeName>
        <fullName>30 kDa protein</fullName>
    </alternativeName>
    <alternativeName>
        <fullName>Cell-to-cell transport protein</fullName>
    </alternativeName>
</protein>
<dbReference type="PIR" id="JQ1457">
    <property type="entry name" value="WMBVL2"/>
</dbReference>
<dbReference type="GO" id="GO:0030430">
    <property type="term" value="C:host cell cytoplasm"/>
    <property type="evidence" value="ECO:0007669"/>
    <property type="project" value="UniProtKB-KW"/>
</dbReference>
<dbReference type="GO" id="GO:0044219">
    <property type="term" value="C:host cell plasmodesma"/>
    <property type="evidence" value="ECO:0007669"/>
    <property type="project" value="UniProtKB-SubCell"/>
</dbReference>
<dbReference type="GO" id="GO:0044163">
    <property type="term" value="C:host cytoskeleton"/>
    <property type="evidence" value="ECO:0007669"/>
    <property type="project" value="UniProtKB-SubCell"/>
</dbReference>
<dbReference type="GO" id="GO:0003723">
    <property type="term" value="F:RNA binding"/>
    <property type="evidence" value="ECO:0007669"/>
    <property type="project" value="UniProtKB-KW"/>
</dbReference>
<dbReference type="GO" id="GO:0046740">
    <property type="term" value="P:transport of virus in host, cell to cell"/>
    <property type="evidence" value="ECO:0007669"/>
    <property type="project" value="UniProtKB-KW"/>
</dbReference>
<dbReference type="InterPro" id="IPR001022">
    <property type="entry name" value="TMV_movement"/>
</dbReference>
<dbReference type="InterPro" id="IPR028919">
    <property type="entry name" value="Viral_movement"/>
</dbReference>
<dbReference type="Pfam" id="PF01107">
    <property type="entry name" value="MP"/>
    <property type="match status" value="1"/>
</dbReference>
<dbReference type="PRINTS" id="PR00964">
    <property type="entry name" value="MOVEMENT"/>
</dbReference>
<feature type="chain" id="PRO_0000144972" description="Movement protein">
    <location>
        <begin position="1"/>
        <end position="264"/>
    </location>
</feature>
<feature type="region of interest" description="Disordered" evidence="4">
    <location>
        <begin position="210"/>
        <end position="264"/>
    </location>
</feature>
<feature type="compositionally biased region" description="Basic residues" evidence="4">
    <location>
        <begin position="210"/>
        <end position="219"/>
    </location>
</feature>
<feature type="compositionally biased region" description="Basic and acidic residues" evidence="4">
    <location>
        <begin position="237"/>
        <end position="247"/>
    </location>
</feature>
<gene>
    <name type="primary">MP</name>
</gene>
<comment type="function">
    <text evidence="2 3">Transports viral genome to neighboring plant cells directly through plasmosdesmata, without any budding. The movement protein allows efficient cell to cell propagation, by bypassing the host cell wall barrier. Forms a ribonucleoprotein complex with viral RNA. Binds microtubules and modulates microtubule stability. Can bind double-stranded DNA. Triggers host hypersensitive defense reaction in incompatible plants harboring resistance (R) proteins.</text>
</comment>
<comment type="subunit">
    <text evidence="1 2 3">Binds to host RBCS at the plasmodesmata; this interaction seems required for viral systemic movement (By similarity). In resistant plants, interacts with host MBP2C at host microtubules; this interaction prevents virus cell to cell movement. In resistant plants, interacts with host resistance (R) protein (e.g. tomato ToMV resistance protein TM-2(2), AC Q71BG9) at the host plasma membrane; this interaction triggers host defense responses leading to programmed cell death (By similarity).</text>
</comment>
<comment type="subcellular location">
    <subcellularLocation>
        <location evidence="3">Host cytoplasm</location>
        <location evidence="3">Host cytoskeleton</location>
    </subcellularLocation>
    <subcellularLocation>
        <location evidence="3">Host cell junction</location>
        <location evidence="3">Host plasmodesma</location>
    </subcellularLocation>
    <text evidence="2 3">Binds to the host cytoskeleton before being transported to the host plasmodesmata. Observed in virus replication complexes (VRCs) of tobamovirus infected host cells (By similarity). In resistant plants, targeted to the host plasma membrane via the interaction with host resistance (R) protein TM-2 (e.g. tomato ToMV resistance protein TM-2(2), AC Q71BG9) (By similarity).</text>
</comment>
<comment type="similarity">
    <text evidence="5">Belongs to the tobamovirus movement protein family.</text>
</comment>
<proteinExistence type="inferred from homology"/>